<organism>
    <name type="scientific">Orientia tsutsugamushi (strain Boryong)</name>
    <name type="common">Rickettsia tsutsugamushi</name>
    <dbReference type="NCBI Taxonomy" id="357244"/>
    <lineage>
        <taxon>Bacteria</taxon>
        <taxon>Pseudomonadati</taxon>
        <taxon>Pseudomonadota</taxon>
        <taxon>Alphaproteobacteria</taxon>
        <taxon>Rickettsiales</taxon>
        <taxon>Rickettsiaceae</taxon>
        <taxon>Rickettsieae</taxon>
        <taxon>Orientia</taxon>
    </lineage>
</organism>
<reference key="1">
    <citation type="journal article" date="2007" name="Proc. Natl. Acad. Sci. U.S.A.">
        <title>The Orientia tsutsugamushi genome reveals massive proliferation of conjugative type IV secretion system and host-cell interaction genes.</title>
        <authorList>
            <person name="Cho N.-H."/>
            <person name="Kim H.-R."/>
            <person name="Lee J.-H."/>
            <person name="Kim S.-Y."/>
            <person name="Kim J."/>
            <person name="Cha S."/>
            <person name="Kim S.-Y."/>
            <person name="Darby A.C."/>
            <person name="Fuxelius H.-H."/>
            <person name="Yin J."/>
            <person name="Kim J.H."/>
            <person name="Kim J."/>
            <person name="Lee S.J."/>
            <person name="Koh Y.-S."/>
            <person name="Jang W.-J."/>
            <person name="Park K.-H."/>
            <person name="Andersson S.G.E."/>
            <person name="Choi M.-S."/>
            <person name="Kim I.-S."/>
        </authorList>
    </citation>
    <scope>NUCLEOTIDE SEQUENCE [LARGE SCALE GENOMIC DNA]</scope>
    <source>
        <strain>Boryong</strain>
    </source>
</reference>
<evidence type="ECO:0000255" key="1">
    <source>
        <dbReference type="HAMAP-Rule" id="MF_00037"/>
    </source>
</evidence>
<gene>
    <name evidence="1" type="primary">murB</name>
    <name type="ordered locus">OTBS_0599</name>
</gene>
<protein>
    <recommendedName>
        <fullName evidence="1">UDP-N-acetylenolpyruvoylglucosamine reductase</fullName>
        <ecNumber evidence="1">1.3.1.98</ecNumber>
    </recommendedName>
    <alternativeName>
        <fullName evidence="1">UDP-N-acetylmuramate dehydrogenase</fullName>
    </alternativeName>
</protein>
<name>MURB_ORITB</name>
<sequence>MSTVISLPKINGEYRKNFKLSQLTWFKVGGISQVFYKPKDEEDLSCFLKNLQFDIQITVLGAGSNLLIRDNGIDGVTIKLGRSFNEINFVKNNHYNIISVGAGTLNYDVAKFCLQHNLGGLEFLVGIPGTIGGGIAMNAGAYGQEFKDVVYSVEALDRLGNKHIFLSKDLNFEYRQCIVNGFLIFTKTNLICYNDSKTSISQKLQKIQTVRKLTQPINQKTAGSAFRNTNNYKAWQLIDKVGLRGHSIGGAQVSNLHCNFLINNGNATASDIENLGELIRKNVFDHTGITLEWEIKIVGKKSL</sequence>
<comment type="function">
    <text evidence="1">Cell wall formation.</text>
</comment>
<comment type="catalytic activity">
    <reaction evidence="1">
        <text>UDP-N-acetyl-alpha-D-muramate + NADP(+) = UDP-N-acetyl-3-O-(1-carboxyvinyl)-alpha-D-glucosamine + NADPH + H(+)</text>
        <dbReference type="Rhea" id="RHEA:12248"/>
        <dbReference type="ChEBI" id="CHEBI:15378"/>
        <dbReference type="ChEBI" id="CHEBI:57783"/>
        <dbReference type="ChEBI" id="CHEBI:58349"/>
        <dbReference type="ChEBI" id="CHEBI:68483"/>
        <dbReference type="ChEBI" id="CHEBI:70757"/>
        <dbReference type="EC" id="1.3.1.98"/>
    </reaction>
</comment>
<comment type="cofactor">
    <cofactor evidence="1">
        <name>FAD</name>
        <dbReference type="ChEBI" id="CHEBI:57692"/>
    </cofactor>
</comment>
<comment type="pathway">
    <text evidence="1">Cell wall biogenesis; peptidoglycan biosynthesis.</text>
</comment>
<comment type="subcellular location">
    <subcellularLocation>
        <location evidence="1">Cytoplasm</location>
    </subcellularLocation>
</comment>
<comment type="similarity">
    <text evidence="1">Belongs to the MurB family.</text>
</comment>
<keyword id="KW-0131">Cell cycle</keyword>
<keyword id="KW-0132">Cell division</keyword>
<keyword id="KW-0133">Cell shape</keyword>
<keyword id="KW-0961">Cell wall biogenesis/degradation</keyword>
<keyword id="KW-0963">Cytoplasm</keyword>
<keyword id="KW-0274">FAD</keyword>
<keyword id="KW-0285">Flavoprotein</keyword>
<keyword id="KW-0521">NADP</keyword>
<keyword id="KW-0560">Oxidoreductase</keyword>
<keyword id="KW-0573">Peptidoglycan synthesis</keyword>
<keyword id="KW-1185">Reference proteome</keyword>
<feature type="chain" id="PRO_0000332485" description="UDP-N-acetylenolpyruvoylglucosamine reductase">
    <location>
        <begin position="1"/>
        <end position="303"/>
    </location>
</feature>
<feature type="domain" description="FAD-binding PCMH-type" evidence="1">
    <location>
        <begin position="27"/>
        <end position="207"/>
    </location>
</feature>
<feature type="active site" evidence="1">
    <location>
        <position position="175"/>
    </location>
</feature>
<feature type="active site" description="Proton donor" evidence="1">
    <location>
        <position position="224"/>
    </location>
</feature>
<feature type="active site" evidence="1">
    <location>
        <position position="294"/>
    </location>
</feature>
<dbReference type="EC" id="1.3.1.98" evidence="1"/>
<dbReference type="EMBL" id="AM494475">
    <property type="protein sequence ID" value="CAM79665.1"/>
    <property type="molecule type" value="Genomic_DNA"/>
</dbReference>
<dbReference type="RefSeq" id="WP_011944569.1">
    <property type="nucleotide sequence ID" value="NC_009488.1"/>
</dbReference>
<dbReference type="SMR" id="A5CD21"/>
<dbReference type="KEGG" id="ots:OTBS_0599"/>
<dbReference type="eggNOG" id="COG0812">
    <property type="taxonomic scope" value="Bacteria"/>
</dbReference>
<dbReference type="HOGENOM" id="CLU_035304_1_0_5"/>
<dbReference type="UniPathway" id="UPA00219"/>
<dbReference type="Proteomes" id="UP000001565">
    <property type="component" value="Chromosome"/>
</dbReference>
<dbReference type="GO" id="GO:0005829">
    <property type="term" value="C:cytosol"/>
    <property type="evidence" value="ECO:0007669"/>
    <property type="project" value="TreeGrafter"/>
</dbReference>
<dbReference type="GO" id="GO:0071949">
    <property type="term" value="F:FAD binding"/>
    <property type="evidence" value="ECO:0007669"/>
    <property type="project" value="InterPro"/>
</dbReference>
<dbReference type="GO" id="GO:0008762">
    <property type="term" value="F:UDP-N-acetylmuramate dehydrogenase activity"/>
    <property type="evidence" value="ECO:0007669"/>
    <property type="project" value="UniProtKB-UniRule"/>
</dbReference>
<dbReference type="GO" id="GO:0051301">
    <property type="term" value="P:cell division"/>
    <property type="evidence" value="ECO:0007669"/>
    <property type="project" value="UniProtKB-KW"/>
</dbReference>
<dbReference type="GO" id="GO:0071555">
    <property type="term" value="P:cell wall organization"/>
    <property type="evidence" value="ECO:0007669"/>
    <property type="project" value="UniProtKB-KW"/>
</dbReference>
<dbReference type="GO" id="GO:0009252">
    <property type="term" value="P:peptidoglycan biosynthetic process"/>
    <property type="evidence" value="ECO:0007669"/>
    <property type="project" value="UniProtKB-UniRule"/>
</dbReference>
<dbReference type="GO" id="GO:0008360">
    <property type="term" value="P:regulation of cell shape"/>
    <property type="evidence" value="ECO:0007669"/>
    <property type="project" value="UniProtKB-KW"/>
</dbReference>
<dbReference type="Gene3D" id="3.30.465.10">
    <property type="match status" value="1"/>
</dbReference>
<dbReference type="Gene3D" id="3.90.78.10">
    <property type="entry name" value="UDP-N-acetylenolpyruvoylglucosamine reductase, C-terminal domain"/>
    <property type="match status" value="1"/>
</dbReference>
<dbReference type="Gene3D" id="3.30.43.10">
    <property type="entry name" value="Uridine Diphospho-n-acetylenolpyruvylglucosamine Reductase, domain 2"/>
    <property type="match status" value="1"/>
</dbReference>
<dbReference type="HAMAP" id="MF_00037">
    <property type="entry name" value="MurB"/>
    <property type="match status" value="1"/>
</dbReference>
<dbReference type="InterPro" id="IPR016166">
    <property type="entry name" value="FAD-bd_PCMH"/>
</dbReference>
<dbReference type="InterPro" id="IPR036318">
    <property type="entry name" value="FAD-bd_PCMH-like_sf"/>
</dbReference>
<dbReference type="InterPro" id="IPR016167">
    <property type="entry name" value="FAD-bd_PCMH_sub1"/>
</dbReference>
<dbReference type="InterPro" id="IPR016169">
    <property type="entry name" value="FAD-bd_PCMH_sub2"/>
</dbReference>
<dbReference type="InterPro" id="IPR003170">
    <property type="entry name" value="MurB"/>
</dbReference>
<dbReference type="InterPro" id="IPR011601">
    <property type="entry name" value="MurB_C"/>
</dbReference>
<dbReference type="InterPro" id="IPR036635">
    <property type="entry name" value="MurB_C_sf"/>
</dbReference>
<dbReference type="InterPro" id="IPR006094">
    <property type="entry name" value="Oxid_FAD_bind_N"/>
</dbReference>
<dbReference type="NCBIfam" id="TIGR00179">
    <property type="entry name" value="murB"/>
    <property type="match status" value="1"/>
</dbReference>
<dbReference type="NCBIfam" id="NF010480">
    <property type="entry name" value="PRK13905.1"/>
    <property type="match status" value="1"/>
</dbReference>
<dbReference type="PANTHER" id="PTHR21071">
    <property type="entry name" value="UDP-N-ACETYLENOLPYRUVOYLGLUCOSAMINE REDUCTASE"/>
    <property type="match status" value="1"/>
</dbReference>
<dbReference type="PANTHER" id="PTHR21071:SF4">
    <property type="entry name" value="UDP-N-ACETYLENOLPYRUVOYLGLUCOSAMINE REDUCTASE"/>
    <property type="match status" value="1"/>
</dbReference>
<dbReference type="Pfam" id="PF01565">
    <property type="entry name" value="FAD_binding_4"/>
    <property type="match status" value="1"/>
</dbReference>
<dbReference type="Pfam" id="PF02873">
    <property type="entry name" value="MurB_C"/>
    <property type="match status" value="1"/>
</dbReference>
<dbReference type="SUPFAM" id="SSF56176">
    <property type="entry name" value="FAD-binding/transporter-associated domain-like"/>
    <property type="match status" value="1"/>
</dbReference>
<dbReference type="SUPFAM" id="SSF56194">
    <property type="entry name" value="Uridine diphospho-N-Acetylenolpyruvylglucosamine reductase, MurB, C-terminal domain"/>
    <property type="match status" value="1"/>
</dbReference>
<dbReference type="PROSITE" id="PS51387">
    <property type="entry name" value="FAD_PCMH"/>
    <property type="match status" value="1"/>
</dbReference>
<proteinExistence type="inferred from homology"/>
<accession>A5CD21</accession>